<gene>
    <name type="primary">AHCYL2</name>
    <name type="synonym">KIAA0828</name>
</gene>
<accession>Q96HN2</accession>
<accession>B4DIZ5</accession>
<accession>D9N155</accession>
<accession>O94917</accession>
<proteinExistence type="evidence at protein level"/>
<reference key="1">
    <citation type="journal article" date="1998" name="DNA Res.">
        <title>Prediction of the coding sequences of unidentified human genes. XII. The complete sequences of 100 new cDNA clones from brain which code for large proteins in vitro.</title>
        <authorList>
            <person name="Nagase T."/>
            <person name="Ishikawa K."/>
            <person name="Suyama M."/>
            <person name="Kikuno R."/>
            <person name="Hirosawa M."/>
            <person name="Miyajima N."/>
            <person name="Tanaka A."/>
            <person name="Kotani H."/>
            <person name="Nomura N."/>
            <person name="Ohara O."/>
        </authorList>
    </citation>
    <scope>NUCLEOTIDE SEQUENCE [LARGE SCALE MRNA] (ISOFORM 2)</scope>
    <source>
        <tissue>Brain</tissue>
    </source>
</reference>
<reference key="2">
    <citation type="journal article" date="2004" name="Nat. Genet.">
        <title>Complete sequencing and characterization of 21,243 full-length human cDNAs.</title>
        <authorList>
            <person name="Ota T."/>
            <person name="Suzuki Y."/>
            <person name="Nishikawa T."/>
            <person name="Otsuki T."/>
            <person name="Sugiyama T."/>
            <person name="Irie R."/>
            <person name="Wakamatsu A."/>
            <person name="Hayashi K."/>
            <person name="Sato H."/>
            <person name="Nagai K."/>
            <person name="Kimura K."/>
            <person name="Makita H."/>
            <person name="Sekine M."/>
            <person name="Obayashi M."/>
            <person name="Nishi T."/>
            <person name="Shibahara T."/>
            <person name="Tanaka T."/>
            <person name="Ishii S."/>
            <person name="Yamamoto J."/>
            <person name="Saito K."/>
            <person name="Kawai Y."/>
            <person name="Isono Y."/>
            <person name="Nakamura Y."/>
            <person name="Nagahari K."/>
            <person name="Murakami K."/>
            <person name="Yasuda T."/>
            <person name="Iwayanagi T."/>
            <person name="Wagatsuma M."/>
            <person name="Shiratori A."/>
            <person name="Sudo H."/>
            <person name="Hosoiri T."/>
            <person name="Kaku Y."/>
            <person name="Kodaira H."/>
            <person name="Kondo H."/>
            <person name="Sugawara M."/>
            <person name="Takahashi M."/>
            <person name="Kanda K."/>
            <person name="Yokoi T."/>
            <person name="Furuya T."/>
            <person name="Kikkawa E."/>
            <person name="Omura Y."/>
            <person name="Abe K."/>
            <person name="Kamihara K."/>
            <person name="Katsuta N."/>
            <person name="Sato K."/>
            <person name="Tanikawa M."/>
            <person name="Yamazaki M."/>
            <person name="Ninomiya K."/>
            <person name="Ishibashi T."/>
            <person name="Yamashita H."/>
            <person name="Murakawa K."/>
            <person name="Fujimori K."/>
            <person name="Tanai H."/>
            <person name="Kimata M."/>
            <person name="Watanabe M."/>
            <person name="Hiraoka S."/>
            <person name="Chiba Y."/>
            <person name="Ishida S."/>
            <person name="Ono Y."/>
            <person name="Takiguchi S."/>
            <person name="Watanabe S."/>
            <person name="Yosida M."/>
            <person name="Hotuta T."/>
            <person name="Kusano J."/>
            <person name="Kanehori K."/>
            <person name="Takahashi-Fujii A."/>
            <person name="Hara H."/>
            <person name="Tanase T.-O."/>
            <person name="Nomura Y."/>
            <person name="Togiya S."/>
            <person name="Komai F."/>
            <person name="Hara R."/>
            <person name="Takeuchi K."/>
            <person name="Arita M."/>
            <person name="Imose N."/>
            <person name="Musashino K."/>
            <person name="Yuuki H."/>
            <person name="Oshima A."/>
            <person name="Sasaki N."/>
            <person name="Aotsuka S."/>
            <person name="Yoshikawa Y."/>
            <person name="Matsunawa H."/>
            <person name="Ichihara T."/>
            <person name="Shiohata N."/>
            <person name="Sano S."/>
            <person name="Moriya S."/>
            <person name="Momiyama H."/>
            <person name="Satoh N."/>
            <person name="Takami S."/>
            <person name="Terashima Y."/>
            <person name="Suzuki O."/>
            <person name="Nakagawa S."/>
            <person name="Senoh A."/>
            <person name="Mizoguchi H."/>
            <person name="Goto Y."/>
            <person name="Shimizu F."/>
            <person name="Wakebe H."/>
            <person name="Hishigaki H."/>
            <person name="Watanabe T."/>
            <person name="Sugiyama A."/>
            <person name="Takemoto M."/>
            <person name="Kawakami B."/>
            <person name="Yamazaki M."/>
            <person name="Watanabe K."/>
            <person name="Kumagai A."/>
            <person name="Itakura S."/>
            <person name="Fukuzumi Y."/>
            <person name="Fujimori Y."/>
            <person name="Komiyama M."/>
            <person name="Tashiro H."/>
            <person name="Tanigami A."/>
            <person name="Fujiwara T."/>
            <person name="Ono T."/>
            <person name="Yamada K."/>
            <person name="Fujii Y."/>
            <person name="Ozaki K."/>
            <person name="Hirao M."/>
            <person name="Ohmori Y."/>
            <person name="Kawabata A."/>
            <person name="Hikiji T."/>
            <person name="Kobatake N."/>
            <person name="Inagaki H."/>
            <person name="Ikema Y."/>
            <person name="Okamoto S."/>
            <person name="Okitani R."/>
            <person name="Kawakami T."/>
            <person name="Noguchi S."/>
            <person name="Itoh T."/>
            <person name="Shigeta K."/>
            <person name="Senba T."/>
            <person name="Matsumura K."/>
            <person name="Nakajima Y."/>
            <person name="Mizuno T."/>
            <person name="Morinaga M."/>
            <person name="Sasaki M."/>
            <person name="Togashi T."/>
            <person name="Oyama M."/>
            <person name="Hata H."/>
            <person name="Watanabe M."/>
            <person name="Komatsu T."/>
            <person name="Mizushima-Sugano J."/>
            <person name="Satoh T."/>
            <person name="Shirai Y."/>
            <person name="Takahashi Y."/>
            <person name="Nakagawa K."/>
            <person name="Okumura K."/>
            <person name="Nagase T."/>
            <person name="Nomura N."/>
            <person name="Kikuchi H."/>
            <person name="Masuho Y."/>
            <person name="Yamashita R."/>
            <person name="Nakai K."/>
            <person name="Yada T."/>
            <person name="Nakamura Y."/>
            <person name="Ohara O."/>
            <person name="Isogai T."/>
            <person name="Sugano S."/>
        </authorList>
    </citation>
    <scope>NUCLEOTIDE SEQUENCE [LARGE SCALE MRNA] (ISOFORMS 3 AND 4)</scope>
    <source>
        <tissue>Colon mucosa</tissue>
        <tissue>Hippocampus</tissue>
    </source>
</reference>
<reference key="3">
    <citation type="journal article" date="2003" name="Nature">
        <title>The DNA sequence of human chromosome 7.</title>
        <authorList>
            <person name="Hillier L.W."/>
            <person name="Fulton R.S."/>
            <person name="Fulton L.A."/>
            <person name="Graves T.A."/>
            <person name="Pepin K.H."/>
            <person name="Wagner-McPherson C."/>
            <person name="Layman D."/>
            <person name="Maas J."/>
            <person name="Jaeger S."/>
            <person name="Walker R."/>
            <person name="Wylie K."/>
            <person name="Sekhon M."/>
            <person name="Becker M.C."/>
            <person name="O'Laughlin M.D."/>
            <person name="Schaller M.E."/>
            <person name="Fewell G.A."/>
            <person name="Delehaunty K.D."/>
            <person name="Miner T.L."/>
            <person name="Nash W.E."/>
            <person name="Cordes M."/>
            <person name="Du H."/>
            <person name="Sun H."/>
            <person name="Edwards J."/>
            <person name="Bradshaw-Cordum H."/>
            <person name="Ali J."/>
            <person name="Andrews S."/>
            <person name="Isak A."/>
            <person name="Vanbrunt A."/>
            <person name="Nguyen C."/>
            <person name="Du F."/>
            <person name="Lamar B."/>
            <person name="Courtney L."/>
            <person name="Kalicki J."/>
            <person name="Ozersky P."/>
            <person name="Bielicki L."/>
            <person name="Scott K."/>
            <person name="Holmes A."/>
            <person name="Harkins R."/>
            <person name="Harris A."/>
            <person name="Strong C.M."/>
            <person name="Hou S."/>
            <person name="Tomlinson C."/>
            <person name="Dauphin-Kohlberg S."/>
            <person name="Kozlowicz-Reilly A."/>
            <person name="Leonard S."/>
            <person name="Rohlfing T."/>
            <person name="Rock S.M."/>
            <person name="Tin-Wollam A.-M."/>
            <person name="Abbott A."/>
            <person name="Minx P."/>
            <person name="Maupin R."/>
            <person name="Strowmatt C."/>
            <person name="Latreille P."/>
            <person name="Miller N."/>
            <person name="Johnson D."/>
            <person name="Murray J."/>
            <person name="Woessner J.P."/>
            <person name="Wendl M.C."/>
            <person name="Yang S.-P."/>
            <person name="Schultz B.R."/>
            <person name="Wallis J.W."/>
            <person name="Spieth J."/>
            <person name="Bieri T.A."/>
            <person name="Nelson J.O."/>
            <person name="Berkowicz N."/>
            <person name="Wohldmann P.E."/>
            <person name="Cook L.L."/>
            <person name="Hickenbotham M.T."/>
            <person name="Eldred J."/>
            <person name="Williams D."/>
            <person name="Bedell J.A."/>
            <person name="Mardis E.R."/>
            <person name="Clifton S.W."/>
            <person name="Chissoe S.L."/>
            <person name="Marra M.A."/>
            <person name="Raymond C."/>
            <person name="Haugen E."/>
            <person name="Gillett W."/>
            <person name="Zhou Y."/>
            <person name="James R."/>
            <person name="Phelps K."/>
            <person name="Iadanoto S."/>
            <person name="Bubb K."/>
            <person name="Simms E."/>
            <person name="Levy R."/>
            <person name="Clendenning J."/>
            <person name="Kaul R."/>
            <person name="Kent W.J."/>
            <person name="Furey T.S."/>
            <person name="Baertsch R.A."/>
            <person name="Brent M.R."/>
            <person name="Keibler E."/>
            <person name="Flicek P."/>
            <person name="Bork P."/>
            <person name="Suyama M."/>
            <person name="Bailey J.A."/>
            <person name="Portnoy M.E."/>
            <person name="Torrents D."/>
            <person name="Chinwalla A.T."/>
            <person name="Gish W.R."/>
            <person name="Eddy S.R."/>
            <person name="McPherson J.D."/>
            <person name="Olson M.V."/>
            <person name="Eichler E.E."/>
            <person name="Green E.D."/>
            <person name="Waterston R.H."/>
            <person name="Wilson R.K."/>
        </authorList>
    </citation>
    <scope>NUCLEOTIDE SEQUENCE [LARGE SCALE GENOMIC DNA]</scope>
</reference>
<reference key="4">
    <citation type="journal article" date="2004" name="Genome Res.">
        <title>The status, quality, and expansion of the NIH full-length cDNA project: the Mammalian Gene Collection (MGC).</title>
        <authorList>
            <consortium name="The MGC Project Team"/>
        </authorList>
    </citation>
    <scope>NUCLEOTIDE SEQUENCE [LARGE SCALE MRNA] (ISOFORM 1)</scope>
    <source>
        <tissue>Lung</tissue>
        <tissue>Uterus</tissue>
    </source>
</reference>
<reference key="5">
    <citation type="journal article" date="2008" name="Proc. Natl. Acad. Sci. U.S.A.">
        <title>A quantitative atlas of mitotic phosphorylation.</title>
        <authorList>
            <person name="Dephoure N."/>
            <person name="Zhou C."/>
            <person name="Villen J."/>
            <person name="Beausoleil S.A."/>
            <person name="Bakalarski C.E."/>
            <person name="Elledge S.J."/>
            <person name="Gygi S.P."/>
        </authorList>
    </citation>
    <scope>PHOSPHORYLATION [LARGE SCALE ANALYSIS] AT SER-107</scope>
    <scope>IDENTIFICATION BY MASS SPECTROMETRY [LARGE SCALE ANALYSIS]</scope>
    <source>
        <tissue>Cervix carcinoma</tissue>
    </source>
</reference>
<reference key="6">
    <citation type="journal article" date="2009" name="Anal. Chem.">
        <title>Lys-N and trypsin cover complementary parts of the phosphoproteome in a refined SCX-based approach.</title>
        <authorList>
            <person name="Gauci S."/>
            <person name="Helbig A.O."/>
            <person name="Slijper M."/>
            <person name="Krijgsveld J."/>
            <person name="Heck A.J."/>
            <person name="Mohammed S."/>
        </authorList>
    </citation>
    <scope>ACETYLATION [LARGE SCALE ANALYSIS] AT SER-2</scope>
    <scope>CLEAVAGE OF INITIATOR METHIONINE [LARGE SCALE ANALYSIS]</scope>
    <scope>IDENTIFICATION BY MASS SPECTROMETRY [LARGE SCALE ANALYSIS]</scope>
</reference>
<reference key="7">
    <citation type="journal article" date="2009" name="J. Neurochem.">
        <title>An IRBIT homologue lacks binding activity to inositol 1,4,5-trisphosphate receptor due to the unique N-terminal appendage.</title>
        <authorList>
            <person name="Ando H."/>
            <person name="Mizutani A."/>
            <person name="Mikoshiba K."/>
        </authorList>
    </citation>
    <scope>FUNCTION</scope>
    <scope>INTERACTION WITH AHCYL1</scope>
    <scope>INTERACTION WITH ITPR1</scope>
    <scope>PHOSPHORYLATION AT SER-149; SER-152; SER-155 AND SER-158</scope>
</reference>
<reference key="8">
    <citation type="journal article" date="2010" name="Sci. Signal.">
        <title>Quantitative phosphoproteomics reveals widespread full phosphorylation site occupancy during mitosis.</title>
        <authorList>
            <person name="Olsen J.V."/>
            <person name="Vermeulen M."/>
            <person name="Santamaria A."/>
            <person name="Kumar C."/>
            <person name="Miller M.L."/>
            <person name="Jensen L.J."/>
            <person name="Gnad F."/>
            <person name="Cox J."/>
            <person name="Jensen T.S."/>
            <person name="Nigg E.A."/>
            <person name="Brunak S."/>
            <person name="Mann M."/>
        </authorList>
    </citation>
    <scope>PHOSPHORYLATION [LARGE SCALE ANALYSIS] AT SER-107</scope>
    <scope>IDENTIFICATION BY MASS SPECTROMETRY [LARGE SCALE ANALYSIS]</scope>
    <source>
        <tissue>Cervix carcinoma</tissue>
    </source>
</reference>
<reference key="9">
    <citation type="journal article" date="2012" name="Mol. Cell. Proteomics">
        <title>Comparative large-scale characterisation of plant vs. mammal proteins reveals similar and idiosyncratic N-alpha acetylation features.</title>
        <authorList>
            <person name="Bienvenut W.V."/>
            <person name="Sumpton D."/>
            <person name="Martinez A."/>
            <person name="Lilla S."/>
            <person name="Espagne C."/>
            <person name="Meinnel T."/>
            <person name="Giglione C."/>
        </authorList>
    </citation>
    <scope>ACETYLATION [LARGE SCALE ANALYSIS] AT SER-2</scope>
    <scope>CLEAVAGE OF INITIATOR METHIONINE [LARGE SCALE ANALYSIS]</scope>
    <scope>IDENTIFICATION BY MASS SPECTROMETRY [LARGE SCALE ANALYSIS]</scope>
</reference>
<reference key="10">
    <citation type="journal article" date="2013" name="J. Proteome Res.">
        <title>Toward a comprehensive characterization of a human cancer cell phosphoproteome.</title>
        <authorList>
            <person name="Zhou H."/>
            <person name="Di Palma S."/>
            <person name="Preisinger C."/>
            <person name="Peng M."/>
            <person name="Polat A.N."/>
            <person name="Heck A.J."/>
            <person name="Mohammed S."/>
        </authorList>
    </citation>
    <scope>PHOSPHORYLATION [LARGE SCALE ANALYSIS] AT SER-107</scope>
    <scope>IDENTIFICATION BY MASS SPECTROMETRY [LARGE SCALE ANALYSIS]</scope>
    <source>
        <tissue>Cervix carcinoma</tissue>
    </source>
</reference>
<reference key="11">
    <citation type="journal article" date="2020" name="Nucleic Acids Res.">
        <title>The human methyltransferase ZCCHC4 catalyses N6-methyladenosine modification of 28S ribosomal RNA.</title>
        <authorList>
            <person name="Pinto R."/>
            <person name="Vaagboe C.B."/>
            <person name="Jakobsson M.E."/>
            <person name="Kim Y."/>
            <person name="Baltissen M.P."/>
            <person name="O'Donohue M.F."/>
            <person name="Guzman U.H."/>
            <person name="Malecki J.M."/>
            <person name="Wu J."/>
            <person name="Kirpekar F."/>
            <person name="Olsen J.V."/>
            <person name="Gleizes P.E."/>
            <person name="Vermeulen M."/>
            <person name="Leidel S.A."/>
            <person name="Slupphaug G."/>
            <person name="Falnes P.O."/>
        </authorList>
    </citation>
    <scope>INTERACTION WITH ZCCHC4</scope>
</reference>
<reference key="12">
    <citation type="submission" date="2009-06" db="PDB data bank">
        <title>Human S-adenosyl homocysteine hydrolase-like 2 protein crystal structure.</title>
        <authorList>
            <consortium name="Structural genomics consortium (SGC)"/>
        </authorList>
    </citation>
    <scope>X-RAY CRYSTALLOGRAPHY (2.25 ANGSTROMS) OF 175-607 IN COMPLEX WITH NAD</scope>
    <scope>SUBUNIT</scope>
</reference>
<evidence type="ECO:0000250" key="1"/>
<evidence type="ECO:0000250" key="2">
    <source>
        <dbReference type="UniProtKB" id="A6QLP2"/>
    </source>
</evidence>
<evidence type="ECO:0000250" key="3">
    <source>
        <dbReference type="UniProtKB" id="Q68FL4"/>
    </source>
</evidence>
<evidence type="ECO:0000256" key="4">
    <source>
        <dbReference type="SAM" id="MobiDB-lite"/>
    </source>
</evidence>
<evidence type="ECO:0000269" key="5">
    <source>
    </source>
</evidence>
<evidence type="ECO:0000269" key="6">
    <source>
    </source>
</evidence>
<evidence type="ECO:0000269" key="7">
    <source ref="12"/>
</evidence>
<evidence type="ECO:0000303" key="8">
    <source>
    </source>
</evidence>
<evidence type="ECO:0000303" key="9">
    <source>
    </source>
</evidence>
<evidence type="ECO:0000303" key="10">
    <source>
    </source>
</evidence>
<evidence type="ECO:0000305" key="11"/>
<evidence type="ECO:0000305" key="12">
    <source>
    </source>
</evidence>
<evidence type="ECO:0000305" key="13">
    <source ref="12"/>
</evidence>
<evidence type="ECO:0007744" key="14">
    <source>
    </source>
</evidence>
<evidence type="ECO:0007744" key="15">
    <source>
    </source>
</evidence>
<evidence type="ECO:0007744" key="16">
    <source>
    </source>
</evidence>
<evidence type="ECO:0007744" key="17">
    <source>
    </source>
</evidence>
<evidence type="ECO:0007744" key="18">
    <source>
    </source>
</evidence>
<evidence type="ECO:0007829" key="19">
    <source>
        <dbReference type="PDB" id="3GVP"/>
    </source>
</evidence>
<keyword id="KW-0002">3D-structure</keyword>
<keyword id="KW-0007">Acetylation</keyword>
<keyword id="KW-0025">Alternative splicing</keyword>
<keyword id="KW-0963">Cytoplasm</keyword>
<keyword id="KW-0256">Endoplasmic reticulum</keyword>
<keyword id="KW-0378">Hydrolase</keyword>
<keyword id="KW-0492">Microsome</keyword>
<keyword id="KW-0520">NAD</keyword>
<keyword id="KW-0554">One-carbon metabolism</keyword>
<keyword id="KW-0597">Phosphoprotein</keyword>
<keyword id="KW-1267">Proteomics identification</keyword>
<keyword id="KW-1185">Reference proteome</keyword>
<dbReference type="EC" id="3.13.2.1"/>
<dbReference type="EMBL" id="AB020635">
    <property type="protein sequence ID" value="BAA74851.1"/>
    <property type="status" value="ALT_INIT"/>
    <property type="molecule type" value="mRNA"/>
</dbReference>
<dbReference type="EMBL" id="AK025372">
    <property type="status" value="NOT_ANNOTATED_CDS"/>
    <property type="molecule type" value="mRNA"/>
</dbReference>
<dbReference type="EMBL" id="AK295851">
    <property type="protein sequence ID" value="BAG58657.1"/>
    <property type="molecule type" value="mRNA"/>
</dbReference>
<dbReference type="EMBL" id="AK316073">
    <property type="protein sequence ID" value="BAH14444.1"/>
    <property type="molecule type" value="mRNA"/>
</dbReference>
<dbReference type="EMBL" id="AC009244">
    <property type="status" value="NOT_ANNOTATED_CDS"/>
    <property type="molecule type" value="Genomic_DNA"/>
</dbReference>
<dbReference type="EMBL" id="AC011005">
    <property type="status" value="NOT_ANNOTATED_CDS"/>
    <property type="molecule type" value="Genomic_DNA"/>
</dbReference>
<dbReference type="EMBL" id="AC083866">
    <property type="status" value="NOT_ANNOTATED_CDS"/>
    <property type="molecule type" value="Genomic_DNA"/>
</dbReference>
<dbReference type="EMBL" id="AC093149">
    <property type="status" value="NOT_ANNOTATED_CDS"/>
    <property type="molecule type" value="Genomic_DNA"/>
</dbReference>
<dbReference type="EMBL" id="BC008349">
    <property type="protein sequence ID" value="AAH08349.1"/>
    <property type="molecule type" value="mRNA"/>
</dbReference>
<dbReference type="EMBL" id="BC024325">
    <property type="protein sequence ID" value="AAH24325.1"/>
    <property type="molecule type" value="mRNA"/>
</dbReference>
<dbReference type="CCDS" id="CCDS47706.1">
    <molecule id="Q96HN2-2"/>
</dbReference>
<dbReference type="CCDS" id="CCDS47707.2">
    <molecule id="Q96HN2-3"/>
</dbReference>
<dbReference type="CCDS" id="CCDS47708.1">
    <molecule id="Q96HN2-4"/>
</dbReference>
<dbReference type="CCDS" id="CCDS5812.1">
    <molecule id="Q96HN2-1"/>
</dbReference>
<dbReference type="RefSeq" id="NP_001124192.1">
    <molecule id="Q96HN2-2"/>
    <property type="nucleotide sequence ID" value="NM_001130720.3"/>
</dbReference>
<dbReference type="RefSeq" id="NP_001124194.2">
    <molecule id="Q96HN2-3"/>
    <property type="nucleotide sequence ID" value="NM_001130722.3"/>
</dbReference>
<dbReference type="RefSeq" id="NP_001124195.1">
    <molecule id="Q96HN2-4"/>
    <property type="nucleotide sequence ID" value="NM_001130723.3"/>
</dbReference>
<dbReference type="RefSeq" id="NP_001380315.1">
    <molecule id="Q96HN2-4"/>
    <property type="nucleotide sequence ID" value="NM_001393386.1"/>
</dbReference>
<dbReference type="RefSeq" id="NP_056143.1">
    <molecule id="Q96HN2-1"/>
    <property type="nucleotide sequence ID" value="NM_015328.4"/>
</dbReference>
<dbReference type="RefSeq" id="XP_047276045.1">
    <molecule id="Q96HN2-4"/>
    <property type="nucleotide sequence ID" value="XM_047420089.1"/>
</dbReference>
<dbReference type="RefSeq" id="XP_054213685.1">
    <molecule id="Q96HN2-4"/>
    <property type="nucleotide sequence ID" value="XM_054357710.1"/>
</dbReference>
<dbReference type="PDB" id="3GVP">
    <property type="method" value="X-ray"/>
    <property type="resolution" value="2.25 A"/>
    <property type="chains" value="A/B/C/D=175-607"/>
</dbReference>
<dbReference type="PDBsum" id="3GVP"/>
<dbReference type="SMR" id="Q96HN2"/>
<dbReference type="BioGRID" id="116958">
    <property type="interactions" value="150"/>
</dbReference>
<dbReference type="FunCoup" id="Q96HN2">
    <property type="interactions" value="1430"/>
</dbReference>
<dbReference type="IntAct" id="Q96HN2">
    <property type="interactions" value="107"/>
</dbReference>
<dbReference type="MINT" id="Q96HN2"/>
<dbReference type="STRING" id="9606.ENSP00000315931"/>
<dbReference type="iPTMnet" id="Q96HN2"/>
<dbReference type="PhosphoSitePlus" id="Q96HN2"/>
<dbReference type="SwissPalm" id="Q96HN2"/>
<dbReference type="BioMuta" id="AHCYL2"/>
<dbReference type="DMDM" id="21759427"/>
<dbReference type="jPOST" id="Q96HN2"/>
<dbReference type="MassIVE" id="Q96HN2"/>
<dbReference type="PaxDb" id="9606-ENSP00000315931"/>
<dbReference type="PeptideAtlas" id="Q96HN2"/>
<dbReference type="ProteomicsDB" id="15179"/>
<dbReference type="ProteomicsDB" id="76768">
    <molecule id="Q96HN2-1"/>
</dbReference>
<dbReference type="ProteomicsDB" id="76769">
    <molecule id="Q96HN2-2"/>
</dbReference>
<dbReference type="ProteomicsDB" id="76770">
    <molecule id="Q96HN2-3"/>
</dbReference>
<dbReference type="Pumba" id="Q96HN2"/>
<dbReference type="Antibodypedia" id="17876">
    <property type="antibodies" value="66 antibodies from 18 providers"/>
</dbReference>
<dbReference type="DNASU" id="23382"/>
<dbReference type="Ensembl" id="ENST00000325006.8">
    <molecule id="Q96HN2-1"/>
    <property type="protein sequence ID" value="ENSP00000315931.3"/>
    <property type="gene ID" value="ENSG00000158467.17"/>
</dbReference>
<dbReference type="Ensembl" id="ENST00000446544.6">
    <molecule id="Q96HN2-2"/>
    <property type="protein sequence ID" value="ENSP00000413639.2"/>
    <property type="gene ID" value="ENSG00000158467.17"/>
</dbReference>
<dbReference type="Ensembl" id="ENST00000474594.5">
    <molecule id="Q96HN2-4"/>
    <property type="protein sequence ID" value="ENSP00000420459.1"/>
    <property type="gene ID" value="ENSG00000158467.17"/>
</dbReference>
<dbReference type="Ensembl" id="ENST00000490911.5">
    <molecule id="Q96HN2-3"/>
    <property type="protein sequence ID" value="ENSP00000420801.1"/>
    <property type="gene ID" value="ENSG00000158467.17"/>
</dbReference>
<dbReference type="GeneID" id="23382"/>
<dbReference type="KEGG" id="hsa:23382"/>
<dbReference type="MANE-Select" id="ENST00000325006.8">
    <property type="protein sequence ID" value="ENSP00000315931.3"/>
    <property type="RefSeq nucleotide sequence ID" value="NM_015328.4"/>
    <property type="RefSeq protein sequence ID" value="NP_056143.1"/>
</dbReference>
<dbReference type="UCSC" id="uc003vot.4">
    <molecule id="Q96HN2-1"/>
    <property type="organism name" value="human"/>
</dbReference>
<dbReference type="AGR" id="HGNC:22204"/>
<dbReference type="CTD" id="23382"/>
<dbReference type="DisGeNET" id="23382"/>
<dbReference type="GeneCards" id="AHCYL2"/>
<dbReference type="HGNC" id="HGNC:22204">
    <property type="gene designation" value="AHCYL2"/>
</dbReference>
<dbReference type="HPA" id="ENSG00000158467">
    <property type="expression patterns" value="Tissue enhanced (choroid plexus, intestine)"/>
</dbReference>
<dbReference type="MIM" id="616520">
    <property type="type" value="gene"/>
</dbReference>
<dbReference type="neXtProt" id="NX_Q96HN2"/>
<dbReference type="OpenTargets" id="ENSG00000158467"/>
<dbReference type="PharmGKB" id="PA162376046"/>
<dbReference type="VEuPathDB" id="HostDB:ENSG00000158467"/>
<dbReference type="eggNOG" id="KOG1370">
    <property type="taxonomic scope" value="Eukaryota"/>
</dbReference>
<dbReference type="GeneTree" id="ENSGT00950000182981"/>
<dbReference type="HOGENOM" id="CLU_025194_2_1_1"/>
<dbReference type="InParanoid" id="Q96HN2"/>
<dbReference type="OMA" id="IVITCTX"/>
<dbReference type="OrthoDB" id="10007170at2759"/>
<dbReference type="PAN-GO" id="Q96HN2">
    <property type="GO annotations" value="2 GO annotations based on evolutionary models"/>
</dbReference>
<dbReference type="PhylomeDB" id="Q96HN2"/>
<dbReference type="TreeFam" id="TF300415"/>
<dbReference type="PathwayCommons" id="Q96HN2"/>
<dbReference type="Reactome" id="R-HSA-425381">
    <property type="pathway name" value="Bicarbonate transporters"/>
</dbReference>
<dbReference type="SignaLink" id="Q96HN2"/>
<dbReference type="SIGNOR" id="Q96HN2"/>
<dbReference type="UniPathway" id="UPA00314">
    <property type="reaction ID" value="UER00076"/>
</dbReference>
<dbReference type="BioGRID-ORCS" id="23382">
    <property type="hits" value="10 hits in 1154 CRISPR screens"/>
</dbReference>
<dbReference type="ChiTaRS" id="AHCYL2">
    <property type="organism name" value="human"/>
</dbReference>
<dbReference type="EvolutionaryTrace" id="Q96HN2"/>
<dbReference type="GenomeRNAi" id="23382"/>
<dbReference type="Pharos" id="Q96HN2">
    <property type="development level" value="Tbio"/>
</dbReference>
<dbReference type="PRO" id="PR:Q96HN2"/>
<dbReference type="Proteomes" id="UP000005640">
    <property type="component" value="Chromosome 7"/>
</dbReference>
<dbReference type="RNAct" id="Q96HN2">
    <property type="molecule type" value="protein"/>
</dbReference>
<dbReference type="Bgee" id="ENSG00000158467">
    <property type="expression patterns" value="Expressed in rectum and 175 other cell types or tissues"/>
</dbReference>
<dbReference type="ExpressionAtlas" id="Q96HN2">
    <property type="expression patterns" value="baseline and differential"/>
</dbReference>
<dbReference type="GO" id="GO:0005829">
    <property type="term" value="C:cytosol"/>
    <property type="evidence" value="ECO:0000318"/>
    <property type="project" value="GO_Central"/>
</dbReference>
<dbReference type="GO" id="GO:0005783">
    <property type="term" value="C:endoplasmic reticulum"/>
    <property type="evidence" value="ECO:0007669"/>
    <property type="project" value="UniProtKB-KW"/>
</dbReference>
<dbReference type="GO" id="GO:0043005">
    <property type="term" value="C:neuron projection"/>
    <property type="evidence" value="ECO:0007669"/>
    <property type="project" value="Ensembl"/>
</dbReference>
<dbReference type="GO" id="GO:0016787">
    <property type="term" value="F:hydrolase activity"/>
    <property type="evidence" value="ECO:0007669"/>
    <property type="project" value="UniProtKB-KW"/>
</dbReference>
<dbReference type="GO" id="GO:0006730">
    <property type="term" value="P:one-carbon metabolic process"/>
    <property type="evidence" value="ECO:0007669"/>
    <property type="project" value="UniProtKB-KW"/>
</dbReference>
<dbReference type="GO" id="GO:0033353">
    <property type="term" value="P:S-adenosylmethionine cycle"/>
    <property type="evidence" value="ECO:0000318"/>
    <property type="project" value="GO_Central"/>
</dbReference>
<dbReference type="CDD" id="cd00401">
    <property type="entry name" value="SAHH"/>
    <property type="match status" value="1"/>
</dbReference>
<dbReference type="FunFam" id="3.40.50.1480:FF:000002">
    <property type="entry name" value="Adenosylhomocysteinase"/>
    <property type="match status" value="1"/>
</dbReference>
<dbReference type="FunFam" id="3.40.50.1480:FF:000007">
    <property type="entry name" value="Adenosylhomocysteinase"/>
    <property type="match status" value="1"/>
</dbReference>
<dbReference type="FunFam" id="3.40.50.720:FF:000035">
    <property type="entry name" value="Adenosylhomocysteinase"/>
    <property type="match status" value="1"/>
</dbReference>
<dbReference type="FunFam" id="3.40.50.1480:FF:000009">
    <property type="entry name" value="Adenosylhomocysteinase like 2"/>
    <property type="match status" value="1"/>
</dbReference>
<dbReference type="Gene3D" id="3.40.50.1480">
    <property type="entry name" value="Adenosylhomocysteinase-like"/>
    <property type="match status" value="3"/>
</dbReference>
<dbReference type="Gene3D" id="3.40.50.720">
    <property type="entry name" value="NAD(P)-binding Rossmann-like Domain"/>
    <property type="match status" value="1"/>
</dbReference>
<dbReference type="InterPro" id="IPR042172">
    <property type="entry name" value="Adenosylhomocyst_ase-like_sf"/>
</dbReference>
<dbReference type="InterPro" id="IPR000043">
    <property type="entry name" value="Adenosylhomocysteinase-like"/>
</dbReference>
<dbReference type="InterPro" id="IPR015878">
    <property type="entry name" value="Ado_hCys_hydrolase_NAD-bd"/>
</dbReference>
<dbReference type="InterPro" id="IPR036291">
    <property type="entry name" value="NAD(P)-bd_dom_sf"/>
</dbReference>
<dbReference type="InterPro" id="IPR020082">
    <property type="entry name" value="S-Ado-L-homoCys_hydrolase_CS"/>
</dbReference>
<dbReference type="NCBIfam" id="TIGR00936">
    <property type="entry name" value="ahcY"/>
    <property type="match status" value="1"/>
</dbReference>
<dbReference type="NCBIfam" id="NF004005">
    <property type="entry name" value="PRK05476.2-3"/>
    <property type="match status" value="1"/>
</dbReference>
<dbReference type="PANTHER" id="PTHR23420">
    <property type="entry name" value="ADENOSYLHOMOCYSTEINASE"/>
    <property type="match status" value="1"/>
</dbReference>
<dbReference type="PANTHER" id="PTHR23420:SF2">
    <property type="entry name" value="ADENOSYLHOMOCYSTEINASE 3"/>
    <property type="match status" value="1"/>
</dbReference>
<dbReference type="Pfam" id="PF05221">
    <property type="entry name" value="AdoHcyase"/>
    <property type="match status" value="1"/>
</dbReference>
<dbReference type="Pfam" id="PF00670">
    <property type="entry name" value="AdoHcyase_NAD"/>
    <property type="match status" value="1"/>
</dbReference>
<dbReference type="SMART" id="SM00996">
    <property type="entry name" value="AdoHcyase"/>
    <property type="match status" value="1"/>
</dbReference>
<dbReference type="SMART" id="SM00997">
    <property type="entry name" value="AdoHcyase_NAD"/>
    <property type="match status" value="1"/>
</dbReference>
<dbReference type="SUPFAM" id="SSF52283">
    <property type="entry name" value="Formate/glycerate dehydrogenase catalytic domain-like"/>
    <property type="match status" value="1"/>
</dbReference>
<dbReference type="SUPFAM" id="SSF51735">
    <property type="entry name" value="NAD(P)-binding Rossmann-fold domains"/>
    <property type="match status" value="1"/>
</dbReference>
<dbReference type="PROSITE" id="PS00738">
    <property type="entry name" value="ADOHCYASE_1"/>
    <property type="match status" value="1"/>
</dbReference>
<dbReference type="PROSITE" id="PS00739">
    <property type="entry name" value="ADOHCYASE_2"/>
    <property type="match status" value="1"/>
</dbReference>
<protein>
    <recommendedName>
        <fullName>Adenosylhomocysteinase 3</fullName>
        <shortName>AdoHcyase 3</shortName>
        <ecNumber>3.13.2.1</ecNumber>
    </recommendedName>
    <alternativeName>
        <fullName>IP(3)Rs binding protein released with IP(3) 2</fullName>
        <shortName>IRBIT2</shortName>
    </alternativeName>
    <alternativeName>
        <fullName evidence="10">Long-IRBIT</fullName>
    </alternativeName>
    <alternativeName>
        <fullName>S-adenosyl-L-homocysteine hydrolase 3</fullName>
    </alternativeName>
    <alternativeName>
        <fullName>S-adenosylhomocysteine hydrolase-like protein 2</fullName>
    </alternativeName>
</protein>
<name>SAHH3_HUMAN</name>
<sequence>MSVQVVSAAAAAKVPEVELKDLSPSEAESQLGLSTAAVGAMAPPAGGGDPEAPAPAAERPPVPGPGSGPAAALSPAAGKVPQASAMKRSDPHHQHQRHRDGGEALVSPDGTVTEAPRTVKKQIQFADQKQEFNKRPTKIGRRSLSRSISQSSTDSYSSAASYTDSSDDETSPRDKQQKNSKGSSDFCVKNIKQAEFGRREIEIAEQEMPALMALRKRAQGEKPLAGAKIVGCTHITAQTAVLMETLGALGAQCRWAACNIYSTLNEVAAALAESGFPVFAWKGESEDDFWWCIDRCVNVEGWQPNMILDDGGDLTHWIYKKYPNMFKKIKGIVEESVTGVHRLYQLSKAGKLCVPAMNVNDSVTKQKFDNLYCCRESILDGLKRTTDMMFGGKQVVVCGYGEVGKGCCAALKAMGSIVYVTEIDPICALQACMDGFRLVKLNEVIRQVDIVITCTGNKNVVTREHLDRMKNSCIVCNMGHSNTEIDVASLRTPELTWERVRSQVDHVIWPDGKRIVLLAEGRLLNLSCSTVPTFVLSITATTQALALIELYNAPEGRYKQDVYLLPKKMDEYVASLHLPTFDAHLTELTDEQAKYLGLNKNGPFKPNYYRY</sequence>
<comment type="function">
    <text evidence="2 5">May regulate the electrogenic sodium/bicarbonate cotransporter SLC4A4 activity and Mg(2+)-sensitivity. On the contrary of its homolog AHCYL1, does not regulate ITPR1 sensitivity to inositol 1,4,5-trisphosphate (PubMed:19220705).</text>
</comment>
<comment type="catalytic activity">
    <reaction>
        <text>S-adenosyl-L-homocysteine + H2O = L-homocysteine + adenosine</text>
        <dbReference type="Rhea" id="RHEA:21708"/>
        <dbReference type="ChEBI" id="CHEBI:15377"/>
        <dbReference type="ChEBI" id="CHEBI:16335"/>
        <dbReference type="ChEBI" id="CHEBI:57856"/>
        <dbReference type="ChEBI" id="CHEBI:58199"/>
        <dbReference type="EC" id="3.13.2.1"/>
    </reaction>
</comment>
<comment type="cofactor">
    <cofactor>
        <name>NAD(+)</name>
        <dbReference type="ChEBI" id="CHEBI:57540"/>
    </cofactor>
    <text>Binds 1 NAD(+) per subunit.</text>
</comment>
<comment type="pathway">
    <text>Amino-acid biosynthesis; L-homocysteine biosynthesis; L-homocysteine from S-adenosyl-L-homocysteine: step 1/1.</text>
</comment>
<comment type="subunit">
    <text evidence="2 5 6 13">Homotetramer (Probable). Forms heteromultimers with AHCYL1 (via the C-terminal region) (PubMed:19220705). Interacts with ITPR1; with lower affinity than AHCYL1 and maybe via ITPR1 (PubMed:19220705). Interacts with SLC4A4 (By similarity). Interacts with ZCCHC4 (PubMed:31799605).</text>
</comment>
<comment type="subcellular location">
    <subcellularLocation>
        <location evidence="2 3">Cytoplasm</location>
    </subcellularLocation>
    <subcellularLocation>
        <location evidence="3">Microsome</location>
    </subcellularLocation>
    <text evidence="3">Associates with membranes when phosphorylated, probably through interaction with ITPR1.</text>
</comment>
<comment type="alternative products">
    <event type="alternative splicing"/>
    <isoform>
        <id>Q96HN2-1</id>
        <name>1</name>
        <sequence type="displayed"/>
    </isoform>
    <isoform>
        <id>Q96HN2-2</id>
        <name>2</name>
        <sequence type="described" ref="VSP_040095"/>
    </isoform>
    <isoform>
        <id>Q96HN2-3</id>
        <name>3</name>
        <sequence type="described" ref="VSP_043185 VSP_043186"/>
    </isoform>
    <isoform>
        <id>Q96HN2-4</id>
        <name>4</name>
        <sequence type="described" ref="VSP_046278 VSP_046279"/>
    </isoform>
</comment>
<comment type="PTM">
    <text evidence="3">Phosphorylated during neuronal differentiation at the LISN domain.</text>
</comment>
<comment type="similarity">
    <text evidence="11">Belongs to the adenosylhomocysteinase family.</text>
</comment>
<comment type="sequence caution" evidence="11">
    <conflict type="erroneous initiation">
        <sequence resource="EMBL-CDS" id="BAA74851"/>
    </conflict>
    <text>Extended N-terminus.</text>
</comment>
<feature type="initiator methionine" description="Removed" evidence="15 17">
    <location>
        <position position="1"/>
    </location>
</feature>
<feature type="chain" id="PRO_0000116909" description="Adenosylhomocysteinase 3">
    <location>
        <begin position="2"/>
        <end position="611"/>
    </location>
</feature>
<feature type="region of interest" description="Disordered" evidence="4">
    <location>
        <begin position="1"/>
        <end position="184"/>
    </location>
</feature>
<feature type="region of interest" description="LISN domain, inhibits interaction with ITPR1" evidence="5">
    <location>
        <begin position="2"/>
        <end position="109"/>
    </location>
</feature>
<feature type="compositionally biased region" description="Low complexity" evidence="4">
    <location>
        <begin position="1"/>
        <end position="14"/>
    </location>
</feature>
<feature type="compositionally biased region" description="Low complexity" evidence="4">
    <location>
        <begin position="36"/>
        <end position="57"/>
    </location>
</feature>
<feature type="compositionally biased region" description="Low complexity" evidence="4">
    <location>
        <begin position="68"/>
        <end position="81"/>
    </location>
</feature>
<feature type="compositionally biased region" description="Basic residues" evidence="4">
    <location>
        <begin position="135"/>
        <end position="144"/>
    </location>
</feature>
<feature type="compositionally biased region" description="Low complexity" evidence="4">
    <location>
        <begin position="145"/>
        <end position="164"/>
    </location>
</feature>
<feature type="binding site" evidence="1">
    <location>
        <position position="236"/>
    </location>
    <ligand>
        <name>substrate</name>
    </ligand>
</feature>
<feature type="binding site" evidence="1">
    <location>
        <position position="310"/>
    </location>
    <ligand>
        <name>substrate</name>
    </ligand>
</feature>
<feature type="binding site" evidence="1">
    <location>
        <position position="335"/>
    </location>
    <ligand>
        <name>substrate</name>
    </ligand>
</feature>
<feature type="binding site" evidence="1">
    <location>
        <begin position="336"/>
        <end position="338"/>
    </location>
    <ligand>
        <name>NAD(+)</name>
        <dbReference type="ChEBI" id="CHEBI:57540"/>
    </ligand>
</feature>
<feature type="binding site" evidence="1">
    <location>
        <position position="365"/>
    </location>
    <ligand>
        <name>substrate</name>
    </ligand>
</feature>
<feature type="binding site" evidence="1">
    <location>
        <position position="369"/>
    </location>
    <ligand>
        <name>substrate</name>
    </ligand>
</feature>
<feature type="binding site" evidence="1">
    <location>
        <position position="370"/>
    </location>
    <ligand>
        <name>NAD(+)</name>
        <dbReference type="ChEBI" id="CHEBI:57540"/>
    </ligand>
</feature>
<feature type="binding site" evidence="7">
    <location>
        <begin position="401"/>
        <end position="406"/>
    </location>
    <ligand>
        <name>NAD(+)</name>
        <dbReference type="ChEBI" id="CHEBI:57540"/>
    </ligand>
</feature>
<feature type="binding site" evidence="7">
    <location>
        <position position="422"/>
    </location>
    <ligand>
        <name>NAD(+)</name>
        <dbReference type="ChEBI" id="CHEBI:57540"/>
    </ligand>
</feature>
<feature type="binding site" evidence="7">
    <location>
        <position position="457"/>
    </location>
    <ligand>
        <name>NAD(+)</name>
        <dbReference type="ChEBI" id="CHEBI:57540"/>
    </ligand>
</feature>
<feature type="binding site" evidence="7">
    <location>
        <begin position="478"/>
        <end position="479"/>
    </location>
    <ligand>
        <name>NAD(+)</name>
        <dbReference type="ChEBI" id="CHEBI:57540"/>
    </ligand>
</feature>
<feature type="binding site" evidence="7">
    <location>
        <position position="525"/>
    </location>
    <ligand>
        <name>NAD(+)</name>
        <dbReference type="ChEBI" id="CHEBI:57540"/>
    </ligand>
</feature>
<feature type="modified residue" description="N-acetylserine" evidence="15 17">
    <location>
        <position position="2"/>
    </location>
</feature>
<feature type="modified residue" description="Phosphoserine" evidence="14 16 18">
    <location>
        <position position="107"/>
    </location>
</feature>
<feature type="modified residue" description="Phosphoserine" evidence="12">
    <location>
        <position position="149"/>
    </location>
</feature>
<feature type="modified residue" description="Phosphoserine" evidence="12">
    <location>
        <position position="152"/>
    </location>
</feature>
<feature type="modified residue" description="Phosphoserine" evidence="12">
    <location>
        <position position="155"/>
    </location>
</feature>
<feature type="modified residue" description="Phosphoserine" evidence="12">
    <location>
        <position position="158"/>
    </location>
</feature>
<feature type="splice variant" id="VSP_046278" description="In isoform 4." evidence="9">
    <original>MSVQVVSAAAAAKVPEVEL</original>
    <variation>MEKWDGNEGTSAFHMPEWM</variation>
    <location>
        <begin position="1"/>
        <end position="19"/>
    </location>
</feature>
<feature type="splice variant" id="VSP_043185" description="In isoform 3." evidence="9">
    <original>MSVQVVSAAAAAKVPEVE</original>
    <variation>MLGSKKKYIVNGNSGIKA</variation>
    <location>
        <begin position="1"/>
        <end position="18"/>
    </location>
</feature>
<feature type="splice variant" id="VSP_043186" description="In isoform 3." evidence="9">
    <location>
        <begin position="19"/>
        <end position="121"/>
    </location>
</feature>
<feature type="splice variant" id="VSP_046279" description="In isoform 4." evidence="9">
    <location>
        <begin position="20"/>
        <end position="122"/>
    </location>
</feature>
<feature type="splice variant" id="VSP_040095" description="In isoform 2." evidence="8">
    <location>
        <position position="122"/>
    </location>
</feature>
<feature type="helix" evidence="19">
    <location>
        <begin position="191"/>
        <end position="193"/>
    </location>
</feature>
<feature type="helix" evidence="19">
    <location>
        <begin position="194"/>
        <end position="206"/>
    </location>
</feature>
<feature type="helix" evidence="19">
    <location>
        <begin position="209"/>
        <end position="218"/>
    </location>
</feature>
<feature type="turn" evidence="19">
    <location>
        <begin position="223"/>
        <end position="226"/>
    </location>
</feature>
<feature type="strand" evidence="19">
    <location>
        <begin position="228"/>
        <end position="233"/>
    </location>
</feature>
<feature type="helix" evidence="19">
    <location>
        <begin position="237"/>
        <end position="248"/>
    </location>
</feature>
<feature type="strand" evidence="19">
    <location>
        <begin position="252"/>
        <end position="261"/>
    </location>
</feature>
<feature type="helix" evidence="19">
    <location>
        <begin position="265"/>
        <end position="274"/>
    </location>
</feature>
<feature type="helix" evidence="19">
    <location>
        <begin position="286"/>
        <end position="297"/>
    </location>
</feature>
<feature type="strand" evidence="19">
    <location>
        <begin position="305"/>
        <end position="312"/>
    </location>
</feature>
<feature type="helix" evidence="19">
    <location>
        <begin position="313"/>
        <end position="321"/>
    </location>
</feature>
<feature type="helix" evidence="19">
    <location>
        <begin position="323"/>
        <end position="327"/>
    </location>
</feature>
<feature type="strand" evidence="19">
    <location>
        <begin position="331"/>
        <end position="334"/>
    </location>
</feature>
<feature type="helix" evidence="19">
    <location>
        <begin position="337"/>
        <end position="343"/>
    </location>
</feature>
<feature type="strand" evidence="19">
    <location>
        <begin position="356"/>
        <end position="358"/>
    </location>
</feature>
<feature type="helix" evidence="19">
    <location>
        <begin position="363"/>
        <end position="369"/>
    </location>
</feature>
<feature type="helix" evidence="19">
    <location>
        <begin position="371"/>
        <end position="386"/>
    </location>
</feature>
<feature type="strand" evidence="19">
    <location>
        <begin position="394"/>
        <end position="398"/>
    </location>
</feature>
<feature type="helix" evidence="19">
    <location>
        <begin position="402"/>
        <end position="413"/>
    </location>
</feature>
<feature type="strand" evidence="19">
    <location>
        <begin position="417"/>
        <end position="421"/>
    </location>
</feature>
<feature type="helix" evidence="19">
    <location>
        <begin position="425"/>
        <end position="433"/>
    </location>
</feature>
<feature type="helix" evidence="19">
    <location>
        <begin position="441"/>
        <end position="444"/>
    </location>
</feature>
<feature type="turn" evidence="19">
    <location>
        <begin position="445"/>
        <end position="447"/>
    </location>
</feature>
<feature type="strand" evidence="19">
    <location>
        <begin position="449"/>
        <end position="453"/>
    </location>
</feature>
<feature type="helix" evidence="19">
    <location>
        <begin position="463"/>
        <end position="468"/>
    </location>
</feature>
<feature type="strand" evidence="19">
    <location>
        <begin position="473"/>
        <end position="477"/>
    </location>
</feature>
<feature type="turn" evidence="19">
    <location>
        <begin position="481"/>
        <end position="484"/>
    </location>
</feature>
<feature type="helix" evidence="19">
    <location>
        <begin position="487"/>
        <end position="490"/>
    </location>
</feature>
<feature type="strand" evidence="19">
    <location>
        <begin position="496"/>
        <end position="501"/>
    </location>
</feature>
<feature type="strand" evidence="19">
    <location>
        <begin position="504"/>
        <end position="508"/>
    </location>
</feature>
<feature type="strand" evidence="19">
    <location>
        <begin position="514"/>
        <end position="518"/>
    </location>
</feature>
<feature type="helix" evidence="19">
    <location>
        <begin position="519"/>
        <end position="521"/>
    </location>
</feature>
<feature type="helix" evidence="19">
    <location>
        <begin position="524"/>
        <end position="528"/>
    </location>
</feature>
<feature type="helix" evidence="19">
    <location>
        <begin position="533"/>
        <end position="552"/>
    </location>
</feature>
<feature type="turn" evidence="19">
    <location>
        <begin position="555"/>
        <end position="557"/>
    </location>
</feature>
<feature type="strand" evidence="19">
    <location>
        <begin position="560"/>
        <end position="564"/>
    </location>
</feature>
<feature type="helix" evidence="19">
    <location>
        <begin position="567"/>
        <end position="577"/>
    </location>
</feature>
<feature type="helix" evidence="19">
    <location>
        <begin position="578"/>
        <end position="581"/>
    </location>
</feature>
<feature type="helix" evidence="19">
    <location>
        <begin position="590"/>
        <end position="596"/>
    </location>
</feature>
<organism>
    <name type="scientific">Homo sapiens</name>
    <name type="common">Human</name>
    <dbReference type="NCBI Taxonomy" id="9606"/>
    <lineage>
        <taxon>Eukaryota</taxon>
        <taxon>Metazoa</taxon>
        <taxon>Chordata</taxon>
        <taxon>Craniata</taxon>
        <taxon>Vertebrata</taxon>
        <taxon>Euteleostomi</taxon>
        <taxon>Mammalia</taxon>
        <taxon>Eutheria</taxon>
        <taxon>Euarchontoglires</taxon>
        <taxon>Primates</taxon>
        <taxon>Haplorrhini</taxon>
        <taxon>Catarrhini</taxon>
        <taxon>Hominidae</taxon>
        <taxon>Homo</taxon>
    </lineage>
</organism>